<comment type="function">
    <text evidence="2 4">Heterogeneous nuclear ribonucleoprotein (hnRNP) that associates with nascent pre-mRNAs, packaging them into hnRNP particles. The hnRNP particle arrangement on nascent hnRNA is non-random and sequence-dependent and serves to condense and stabilize the transcripts and minimize tangling and knotting. Packaging plays a role in various processes such as transcription, pre-mRNA processing, RNA nuclear export, subcellular location, mRNA translation and stability of mature mRNAs. Forms hnRNP particles with at least 20 other different hnRNP and heterogeneous nuclear RNA in the nucleus. Involved in transport of specific mRNAs to the cytoplasm in oligodendrocytes and neurons: acts by specifically recognizing and binding the A2RE (21 nucleotide hnRNP A2 response element) or the A2RE11 (derivative 11 nucleotide oligonucleotide) sequence motifs present on some mRNAs, and promotes their transport to the cytoplasm (By similarity). Specifically binds single-stranded telomeric DNA sequences, protecting telomeric DNA repeat against endonuclease digestion (By similarity). Also binds other RNA molecules, such as primary miRNA (pri-miRNAs): acts as a nuclear 'reader' of the N6-methyladenosine (m6A) mark by specifically recognizing and binding a subset of nuclear m6A-containing pri-miRNAs. Binding to m6A-containing pri-miRNAs promotes pri-miRNA processing by enhancing binding of DGCR8 to pri-miRNA transcripts. Involved in miRNA sorting into exosomes following sumoylation, possibly by binding (m6A)-containing pre-miRNAs. Acts as a regulator of efficiency of mRNA splicing, possibly by binding to m6A-containing pre-mRNAs (By similarity). Plays a role in the splicing of pyruvate kinase PKM by binding repressively to sequences flanking PKM exon 9, inhibiting exon 9 inclusion and resulting in exon 10 inclusion and production of the PKM M2 isoform (By similarity).</text>
</comment>
<comment type="subunit">
    <text evidence="4">Identified in the spliceosome C complex. Identified in a IGF2BP1-dependent mRNP granule complex containing untranslated mRNAs. Interacts with IGF2BP1. Interacts with C9orf72. Interacts with DGCR8. Interacts with TARDBP. Interacts with CKAP5 (By similarity). Interacts with PPIA/CYPA (By similarity). Interacts (via C-terminus) with FAM76B; the interaction results in retention of HNRNPA2B1 in the nucleus and inhibition of the NF-kappa-B-mediated inflammatory pathway (By similarity). Interacts with NF-kappa-B inhibitors NFKBIA and NFKBIE; the interaction may be mediated by the RRM2 domain of HNRNPA2B1, and HNRNPA2B1 may interact simultaneously with FAM76B and either NFKBIA or NFKBIE to form a complex (By similarity).</text>
</comment>
<comment type="subcellular location">
    <subcellularLocation>
        <location evidence="4">Nucleus</location>
        <location evidence="4">Nucleoplasm</location>
    </subcellularLocation>
    <subcellularLocation>
        <location evidence="4">Cytoplasmic granule</location>
    </subcellularLocation>
    <subcellularLocation>
        <location evidence="4">Secreted</location>
        <location evidence="4">Extracellular exosome</location>
    </subcellularLocation>
    <text evidence="4">Localized in cytoplasmic mRNP granules containing untranslated mRNAs. Component of ribonucleosomes. Not found in the nucleolus. Found in exosomes follwong sumoylation.</text>
</comment>
<comment type="domain">
    <text evidence="4">The disordered region, when incubated at high concentration, is able to polymerize into labile, amyloid-like fibers and form cross-beta polymerization structures, probably driving the formation of hydrogels. In contrast to irreversible, pathogenic amyloids, the fibers polymerized from LC regions disassemble upon dilution. A number of evidence suggests that formation of cross-beta structures by LC regions mediate the formation of RNA granules, liquid-like droplets, and hydrogels.</text>
</comment>
<comment type="PTM">
    <text evidence="4">Sumoylated in exosomes, promoting miRNAs-binding.</text>
</comment>
<comment type="PTM">
    <text evidence="2 4">Asymmetric dimethylation at Arg-254 constitutes the major methylation site (By similarity). According to a report, methylation affects subcellular location and promotes nuclear localization (By similarity). According to another report, methylation at Arg-254 does not influence nucleocytoplasmic shuttling (By similarity).</text>
</comment>
<evidence type="ECO:0000250" key="1"/>
<evidence type="ECO:0000250" key="2">
    <source>
        <dbReference type="UniProtKB" id="A7VJC2"/>
    </source>
</evidence>
<evidence type="ECO:0000250" key="3">
    <source>
        <dbReference type="UniProtKB" id="O88569"/>
    </source>
</evidence>
<evidence type="ECO:0000250" key="4">
    <source>
        <dbReference type="UniProtKB" id="P22626"/>
    </source>
</evidence>
<evidence type="ECO:0000255" key="5">
    <source>
        <dbReference type="PROSITE-ProRule" id="PRU00176"/>
    </source>
</evidence>
<evidence type="ECO:0000256" key="6">
    <source>
        <dbReference type="SAM" id="MobiDB-lite"/>
    </source>
</evidence>
<keyword id="KW-0007">Acetylation</keyword>
<keyword id="KW-0903">Direct protein sequencing</keyword>
<keyword id="KW-1017">Isopeptide bond</keyword>
<keyword id="KW-0488">Methylation</keyword>
<keyword id="KW-0507">mRNA processing</keyword>
<keyword id="KW-0508">mRNA splicing</keyword>
<keyword id="KW-0509">mRNA transport</keyword>
<keyword id="KW-0539">Nucleus</keyword>
<keyword id="KW-0597">Phosphoprotein</keyword>
<keyword id="KW-0677">Repeat</keyword>
<keyword id="KW-0687">Ribonucleoprotein</keyword>
<keyword id="KW-0694">RNA-binding</keyword>
<keyword id="KW-0964">Secreted</keyword>
<keyword id="KW-0747">Spliceosome</keyword>
<keyword id="KW-0813">Transport</keyword>
<keyword id="KW-0832">Ubl conjugation</keyword>
<sequence length="341" mass="35947">MEREKEQFRKLFIGGLSFQTTEESLRNYYEQWGKLTDCVVMRDPASKRSRGFGFVTFSSMAEVDAAMAARPHSIDGRVVEPKRAVAREESGKPGAHVTVKKLFVGGIKEDTEEHHLRDYFAEYGKIDTIEIITDRQSGKKRGFGFVTFDDHDPVDKIVLQKYHTINGHNAEVRKALSRQEMQEVQSSRSGRGGNFGFGDSRGGGGNFGPGPGSNFRGGSDGYGSGRGFGDGYNGYGGGPGGGNFGGSPGYGGGRGGYGGGGPGYGNQGGGYGGGYDNYGGGNYGSGNYNDFGNYNQQPSNYGPMKSGNFGGSRNMGGPYGGGNYGPGGSGGSGGYGGRSRY</sequence>
<accession>Q9TTV2</accession>
<proteinExistence type="evidence at protein level"/>
<reference key="1">
    <citation type="journal article" date="2000" name="J. Biol. Chem.">
        <title>The vitamin D response element-binding protein. A novel dominant-negative regulator of vitamin D-directed transactivation.</title>
        <authorList>
            <person name="Chen H."/>
            <person name="Hu B."/>
            <person name="Allegretto E.A."/>
            <person name="Adams J.S."/>
        </authorList>
    </citation>
    <scope>NUCLEOTIDE SEQUENCE [MRNA]</scope>
    <scope>PARTIAL PROTEIN SEQUENCE</scope>
</reference>
<protein>
    <recommendedName>
        <fullName>Heterogeneous nuclear ribonucleoproteins A2/B1</fullName>
        <shortName>hnRNP A2/B1</shortName>
    </recommendedName>
    <alternativeName>
        <fullName>Vitamin D response element-binding protein 2</fullName>
        <shortName>VDRE-BP 2</shortName>
    </alternativeName>
</protein>
<organism>
    <name type="scientific">Saguinus oedipus</name>
    <name type="common">Cotton-top tamarin</name>
    <dbReference type="NCBI Taxonomy" id="9490"/>
    <lineage>
        <taxon>Eukaryota</taxon>
        <taxon>Metazoa</taxon>
        <taxon>Chordata</taxon>
        <taxon>Craniata</taxon>
        <taxon>Vertebrata</taxon>
        <taxon>Euteleostomi</taxon>
        <taxon>Mammalia</taxon>
        <taxon>Eutheria</taxon>
        <taxon>Euarchontoglires</taxon>
        <taxon>Primates</taxon>
        <taxon>Haplorrhini</taxon>
        <taxon>Platyrrhini</taxon>
        <taxon>Cebidae</taxon>
        <taxon>Callitrichinae</taxon>
        <taxon>Saguinus</taxon>
    </lineage>
</organism>
<gene>
    <name type="primary">HNRNPA2B1</name>
    <name type="synonym">HNRPA2B1</name>
</gene>
<feature type="chain" id="PRO_0000273981" description="Heterogeneous nuclear ribonucleoproteins A2/B1">
    <location>
        <begin position="1"/>
        <end position="341"/>
    </location>
</feature>
<feature type="domain" description="RRM 1" evidence="5">
    <location>
        <begin position="9"/>
        <end position="92"/>
    </location>
</feature>
<feature type="domain" description="RRM 2" evidence="5">
    <location>
        <begin position="100"/>
        <end position="179"/>
    </location>
</feature>
<feature type="region of interest" description="Disordered" evidence="4">
    <location>
        <begin position="181"/>
        <end position="341"/>
    </location>
</feature>
<feature type="region of interest" description="Nuclear targeting sequence" evidence="1">
    <location>
        <begin position="296"/>
        <end position="335"/>
    </location>
</feature>
<feature type="compositionally biased region" description="Gly residues" evidence="6">
    <location>
        <begin position="190"/>
        <end position="211"/>
    </location>
</feature>
<feature type="compositionally biased region" description="Gly residues" evidence="6">
    <location>
        <begin position="308"/>
        <end position="341"/>
    </location>
</feature>
<feature type="modified residue" description="Phosphoserine" evidence="4">
    <location>
        <position position="17"/>
    </location>
</feature>
<feature type="modified residue" description="Omega-N-methylarginine" evidence="3">
    <location>
        <position position="26"/>
    </location>
</feature>
<feature type="modified residue" description="Phosphoserine" evidence="4">
    <location>
        <position position="73"/>
    </location>
</feature>
<feature type="modified residue" description="N6,N6-dimethyllysine; alternate" evidence="4">
    <location>
        <position position="92"/>
    </location>
</feature>
<feature type="modified residue" description="Phosphothreonine" evidence="4">
    <location>
        <position position="128"/>
    </location>
</feature>
<feature type="modified residue" description="Phosphoserine" evidence="4">
    <location>
        <position position="137"/>
    </location>
</feature>
<feature type="modified residue" description="Phosphothreonine" evidence="4">
    <location>
        <position position="147"/>
    </location>
</feature>
<feature type="modified residue" description="N6-acetyllysine; alternate" evidence="4">
    <location>
        <position position="156"/>
    </location>
</feature>
<feature type="modified residue" description="N6-acetyllysine; alternate" evidence="4">
    <location>
        <position position="161"/>
    </location>
</feature>
<feature type="modified residue" description="Phosphothreonine" evidence="4">
    <location>
        <position position="164"/>
    </location>
</feature>
<feature type="modified residue" description="Phosphoserine" evidence="4">
    <location>
        <position position="177"/>
    </location>
</feature>
<feature type="modified residue" description="Phosphoserine" evidence="4">
    <location>
        <position position="189"/>
    </location>
</feature>
<feature type="modified residue" description="Asymmetric dimethylarginine; alternate" evidence="3">
    <location>
        <position position="191"/>
    </location>
</feature>
<feature type="modified residue" description="Dimethylated arginine; alternate" evidence="4">
    <location>
        <position position="191"/>
    </location>
</feature>
<feature type="modified residue" description="Omega-N-methylarginine; alternate" evidence="4">
    <location>
        <position position="191"/>
    </location>
</feature>
<feature type="modified residue" description="Phosphoserine" evidence="4">
    <location>
        <position position="200"/>
    </location>
</feature>
<feature type="modified residue" description="Asymmetric dimethylarginine; alternate" evidence="3">
    <location>
        <position position="201"/>
    </location>
</feature>
<feature type="modified residue" description="Dimethylated arginine; alternate" evidence="4">
    <location>
        <position position="201"/>
    </location>
</feature>
<feature type="modified residue" description="Omega-N-methylarginine; alternate" evidence="4">
    <location>
        <position position="201"/>
    </location>
</feature>
<feature type="modified residue" description="Phosphoserine" evidence="4">
    <location>
        <position position="213"/>
    </location>
</feature>
<feature type="modified residue" description="Omega-N-methylarginine" evidence="4">
    <location>
        <position position="216"/>
    </location>
</feature>
<feature type="modified residue" description="Phosphoserine" evidence="4">
    <location>
        <position position="219"/>
    </location>
</feature>
<feature type="modified residue" description="Phosphoserine" evidence="4">
    <location>
        <position position="224"/>
    </location>
</feature>
<feature type="modified residue" description="Omega-N-methylarginine" evidence="4">
    <location>
        <position position="226"/>
    </location>
</feature>
<feature type="modified residue" description="Phosphoserine" evidence="4">
    <location>
        <position position="247"/>
    </location>
</feature>
<feature type="modified residue" description="Asymmetric dimethylarginine; alternate" evidence="2">
    <location>
        <position position="254"/>
    </location>
</feature>
<feature type="modified residue" description="Omega-N-methylarginine; alternate" evidence="4">
    <location>
        <position position="254"/>
    </location>
</feature>
<feature type="modified residue" description="Phosphoserine" evidence="4">
    <location>
        <position position="312"/>
    </location>
</feature>
<feature type="modified residue" description="Omega-N-methylarginine" evidence="4">
    <location>
        <position position="313"/>
    </location>
</feature>
<feature type="modified residue" description="Phosphotyrosine" evidence="4">
    <location>
        <position position="319"/>
    </location>
</feature>
<feature type="modified residue" description="Phosphoserine" evidence="4">
    <location>
        <position position="329"/>
    </location>
</feature>
<feature type="modified residue" description="Phosphoserine" evidence="4">
    <location>
        <position position="332"/>
    </location>
</feature>
<feature type="modified residue" description="Phosphotyrosine" evidence="4">
    <location>
        <position position="335"/>
    </location>
</feature>
<feature type="modified residue" description="Omega-N-methylarginine" evidence="4">
    <location>
        <position position="338"/>
    </location>
</feature>
<feature type="cross-link" description="Glycyl lysine isopeptide (Lys-Gly) (interchain with G-Cter in SUMO2)" evidence="4">
    <location>
        <position position="10"/>
    </location>
</feature>
<feature type="cross-link" description="Glycyl lysine isopeptide (Lys-Gly) (interchain with G-Cter in SUMO2); alternate" evidence="4">
    <location>
        <position position="92"/>
    </location>
</feature>
<feature type="cross-link" description="Glycyl lysine isopeptide (Lys-Gly) (interchain with G-Cter in SUMO2)" evidence="4">
    <location>
        <position position="100"/>
    </location>
</feature>
<feature type="cross-link" description="Glycyl lysine isopeptide (Lys-Gly) (interchain with G-Cter in SUMO2)" evidence="4">
    <location>
        <position position="108"/>
    </location>
</feature>
<feature type="cross-link" description="Glycyl lysine isopeptide (Lys-Gly) (interchain with G-Cter in SUMO2)" evidence="4">
    <location>
        <position position="125"/>
    </location>
</feature>
<feature type="cross-link" description="Glycyl lysine isopeptide (Lys-Gly) (interchain with G-Cter in SUMO2)" evidence="4">
    <location>
        <position position="140"/>
    </location>
</feature>
<feature type="cross-link" description="Glycyl lysine isopeptide (Lys-Gly) (interchain with G-Cter in SUMO2); alternate" evidence="4">
    <location>
        <position position="156"/>
    </location>
</feature>
<feature type="cross-link" description="Glycyl lysine isopeptide (Lys-Gly) (interchain with G-Cter in SUMO2); alternate" evidence="4">
    <location>
        <position position="161"/>
    </location>
</feature>
<feature type="cross-link" description="Glycyl lysine isopeptide (Lys-Gly) (interchain with G-Cter in SUMO2)" evidence="4">
    <location>
        <position position="174"/>
    </location>
</feature>
<name>ROA2_SAGOE</name>
<dbReference type="EMBL" id="AF192348">
    <property type="protein sequence ID" value="AAF06330.1"/>
    <property type="molecule type" value="mRNA"/>
</dbReference>
<dbReference type="SMR" id="Q9TTV2"/>
<dbReference type="GO" id="GO:0071013">
    <property type="term" value="C:catalytic step 2 spliceosome"/>
    <property type="evidence" value="ECO:0007669"/>
    <property type="project" value="TreeGrafter"/>
</dbReference>
<dbReference type="GO" id="GO:0005737">
    <property type="term" value="C:cytoplasm"/>
    <property type="evidence" value="ECO:0000250"/>
    <property type="project" value="UniProtKB"/>
</dbReference>
<dbReference type="GO" id="GO:0070062">
    <property type="term" value="C:extracellular exosome"/>
    <property type="evidence" value="ECO:0000250"/>
    <property type="project" value="UniProtKB"/>
</dbReference>
<dbReference type="GO" id="GO:0005654">
    <property type="term" value="C:nucleoplasm"/>
    <property type="evidence" value="ECO:0007669"/>
    <property type="project" value="UniProtKB-SubCell"/>
</dbReference>
<dbReference type="GO" id="GO:0005634">
    <property type="term" value="C:nucleus"/>
    <property type="evidence" value="ECO:0000250"/>
    <property type="project" value="UniProtKB"/>
</dbReference>
<dbReference type="GO" id="GO:1990904">
    <property type="term" value="C:ribonucleoprotein complex"/>
    <property type="evidence" value="ECO:0000250"/>
    <property type="project" value="UniProtKB"/>
</dbReference>
<dbReference type="GO" id="GO:0035198">
    <property type="term" value="F:miRNA binding"/>
    <property type="evidence" value="ECO:0000250"/>
    <property type="project" value="UniProtKB"/>
</dbReference>
<dbReference type="GO" id="GO:0003730">
    <property type="term" value="F:mRNA 3'-UTR binding"/>
    <property type="evidence" value="ECO:0000250"/>
    <property type="project" value="UniProtKB"/>
</dbReference>
<dbReference type="GO" id="GO:1990247">
    <property type="term" value="F:N6-methyladenosine-containing RNA reader activity"/>
    <property type="evidence" value="ECO:0000250"/>
    <property type="project" value="UniProtKB"/>
</dbReference>
<dbReference type="GO" id="GO:0043047">
    <property type="term" value="F:single-stranded telomeric DNA binding"/>
    <property type="evidence" value="ECO:0000250"/>
    <property type="project" value="UniProtKB"/>
</dbReference>
<dbReference type="GO" id="GO:1990428">
    <property type="term" value="P:miRNA transport"/>
    <property type="evidence" value="ECO:0000250"/>
    <property type="project" value="UniProtKB"/>
</dbReference>
<dbReference type="GO" id="GO:0006406">
    <property type="term" value="P:mRNA export from nucleus"/>
    <property type="evidence" value="ECO:0000250"/>
    <property type="project" value="UniProtKB"/>
</dbReference>
<dbReference type="GO" id="GO:0000398">
    <property type="term" value="P:mRNA splicing, via spliceosome"/>
    <property type="evidence" value="ECO:0000250"/>
    <property type="project" value="UniProtKB"/>
</dbReference>
<dbReference type="GO" id="GO:0031053">
    <property type="term" value="P:primary miRNA processing"/>
    <property type="evidence" value="ECO:0000250"/>
    <property type="project" value="UniProtKB"/>
</dbReference>
<dbReference type="CDD" id="cd12762">
    <property type="entry name" value="RRM1_hnRNPA2B1"/>
    <property type="match status" value="1"/>
</dbReference>
<dbReference type="CDD" id="cd12581">
    <property type="entry name" value="RRM2_hnRNPA2B1"/>
    <property type="match status" value="1"/>
</dbReference>
<dbReference type="FunFam" id="3.30.70.330:FF:000040">
    <property type="entry name" value="Heterogeneous nuclear ribonucleoprotein A2/B1"/>
    <property type="match status" value="1"/>
</dbReference>
<dbReference type="FunFam" id="3.30.70.330:FF:000108">
    <property type="entry name" value="Heterogeneous nuclear ribonucleoproteins A2/B1"/>
    <property type="match status" value="1"/>
</dbReference>
<dbReference type="Gene3D" id="3.30.70.330">
    <property type="match status" value="2"/>
</dbReference>
<dbReference type="InterPro" id="IPR021662">
    <property type="entry name" value="HnRNPA1/A2_C"/>
</dbReference>
<dbReference type="InterPro" id="IPR034486">
    <property type="entry name" value="hnRNPA2B1_RRM1"/>
</dbReference>
<dbReference type="InterPro" id="IPR012677">
    <property type="entry name" value="Nucleotide-bd_a/b_plait_sf"/>
</dbReference>
<dbReference type="InterPro" id="IPR035979">
    <property type="entry name" value="RBD_domain_sf"/>
</dbReference>
<dbReference type="InterPro" id="IPR000504">
    <property type="entry name" value="RRM_dom"/>
</dbReference>
<dbReference type="PANTHER" id="PTHR48026:SF13">
    <property type="entry name" value="HETEROGENEOUS NUCLEAR RIBONUCLEOPROTEINS A2_B1"/>
    <property type="match status" value="1"/>
</dbReference>
<dbReference type="PANTHER" id="PTHR48026">
    <property type="entry name" value="HOMOLOGOUS TO DROSOPHILA SQD (SQUID) PROTEIN"/>
    <property type="match status" value="1"/>
</dbReference>
<dbReference type="Pfam" id="PF11627">
    <property type="entry name" value="HnRNPA1_LC"/>
    <property type="match status" value="1"/>
</dbReference>
<dbReference type="Pfam" id="PF00076">
    <property type="entry name" value="RRM_1"/>
    <property type="match status" value="2"/>
</dbReference>
<dbReference type="SMART" id="SM00360">
    <property type="entry name" value="RRM"/>
    <property type="match status" value="2"/>
</dbReference>
<dbReference type="SUPFAM" id="SSF54928">
    <property type="entry name" value="RNA-binding domain, RBD"/>
    <property type="match status" value="2"/>
</dbReference>
<dbReference type="PROSITE" id="PS50102">
    <property type="entry name" value="RRM"/>
    <property type="match status" value="2"/>
</dbReference>